<reference key="1">
    <citation type="journal article" date="2005" name="Proc. Natl. Acad. Sci. U.S.A.">
        <title>Genome analysis of multiple pathogenic isolates of Streptococcus agalactiae: implications for the microbial 'pan-genome'.</title>
        <authorList>
            <person name="Tettelin H."/>
            <person name="Masignani V."/>
            <person name="Cieslewicz M.J."/>
            <person name="Donati C."/>
            <person name="Medini D."/>
            <person name="Ward N.L."/>
            <person name="Angiuoli S.V."/>
            <person name="Crabtree J."/>
            <person name="Jones A.L."/>
            <person name="Durkin A.S."/>
            <person name="DeBoy R.T."/>
            <person name="Davidsen T.M."/>
            <person name="Mora M."/>
            <person name="Scarselli M."/>
            <person name="Margarit y Ros I."/>
            <person name="Peterson J.D."/>
            <person name="Hauser C.R."/>
            <person name="Sundaram J.P."/>
            <person name="Nelson W.C."/>
            <person name="Madupu R."/>
            <person name="Brinkac L.M."/>
            <person name="Dodson R.J."/>
            <person name="Rosovitz M.J."/>
            <person name="Sullivan S.A."/>
            <person name="Daugherty S.C."/>
            <person name="Haft D.H."/>
            <person name="Selengut J."/>
            <person name="Gwinn M.L."/>
            <person name="Zhou L."/>
            <person name="Zafar N."/>
            <person name="Khouri H."/>
            <person name="Radune D."/>
            <person name="Dimitrov G."/>
            <person name="Watkins K."/>
            <person name="O'Connor K.J."/>
            <person name="Smith S."/>
            <person name="Utterback T.R."/>
            <person name="White O."/>
            <person name="Rubens C.E."/>
            <person name="Grandi G."/>
            <person name="Madoff L.C."/>
            <person name="Kasper D.L."/>
            <person name="Telford J.L."/>
            <person name="Wessels M.R."/>
            <person name="Rappuoli R."/>
            <person name="Fraser C.M."/>
        </authorList>
    </citation>
    <scope>NUCLEOTIDE SEQUENCE [LARGE SCALE GENOMIC DNA]</scope>
    <source>
        <strain>ATCC 27591 / A909 / CDC SS700</strain>
    </source>
</reference>
<sequence length="242" mass="25904">MEPKYQRILIKLSGEALAGDKGVGIDIPTVQSIAKEIAEVHNSGVQIALVIGGGNLWRGEPAAEAGMDRVQADYTGMLGTVMNALVMADSLQQYGVDTRVQTAIPMQTVAEPYVRGRALRHLEKNRIVVFGAGIGSPYFSTDTTAALRAAEIEAEAILMAKNGVDGVYNADPKKDANAVKFDELTHVEVIKRGLKIMDATASTISMDNDIDLVVFNMNETGNIKRVVLGEQIGTTVSNKASE</sequence>
<name>PYRH_STRA1</name>
<gene>
    <name evidence="1" type="primary">pyrH</name>
    <name type="ordered locus">SAK_1537</name>
</gene>
<feature type="chain" id="PRO_1000054027" description="Uridylate kinase">
    <location>
        <begin position="1"/>
        <end position="242"/>
    </location>
</feature>
<feature type="region of interest" description="Involved in allosteric activation by GTP" evidence="1">
    <location>
        <begin position="19"/>
        <end position="24"/>
    </location>
</feature>
<feature type="binding site" evidence="1">
    <location>
        <begin position="11"/>
        <end position="14"/>
    </location>
    <ligand>
        <name>ATP</name>
        <dbReference type="ChEBI" id="CHEBI:30616"/>
    </ligand>
</feature>
<feature type="binding site" evidence="1">
    <location>
        <position position="53"/>
    </location>
    <ligand>
        <name>UMP</name>
        <dbReference type="ChEBI" id="CHEBI:57865"/>
    </ligand>
</feature>
<feature type="binding site" evidence="1">
    <location>
        <position position="54"/>
    </location>
    <ligand>
        <name>ATP</name>
        <dbReference type="ChEBI" id="CHEBI:30616"/>
    </ligand>
</feature>
<feature type="binding site" evidence="1">
    <location>
        <position position="58"/>
    </location>
    <ligand>
        <name>ATP</name>
        <dbReference type="ChEBI" id="CHEBI:30616"/>
    </ligand>
</feature>
<feature type="binding site" evidence="1">
    <location>
        <position position="73"/>
    </location>
    <ligand>
        <name>UMP</name>
        <dbReference type="ChEBI" id="CHEBI:57865"/>
    </ligand>
</feature>
<feature type="binding site" evidence="1">
    <location>
        <begin position="134"/>
        <end position="141"/>
    </location>
    <ligand>
        <name>UMP</name>
        <dbReference type="ChEBI" id="CHEBI:57865"/>
    </ligand>
</feature>
<feature type="binding site" evidence="1">
    <location>
        <position position="162"/>
    </location>
    <ligand>
        <name>ATP</name>
        <dbReference type="ChEBI" id="CHEBI:30616"/>
    </ligand>
</feature>
<feature type="binding site" evidence="1">
    <location>
        <position position="168"/>
    </location>
    <ligand>
        <name>ATP</name>
        <dbReference type="ChEBI" id="CHEBI:30616"/>
    </ligand>
</feature>
<feature type="binding site" evidence="1">
    <location>
        <position position="171"/>
    </location>
    <ligand>
        <name>ATP</name>
        <dbReference type="ChEBI" id="CHEBI:30616"/>
    </ligand>
</feature>
<organism>
    <name type="scientific">Streptococcus agalactiae serotype Ia (strain ATCC 27591 / A909 / CDC SS700)</name>
    <dbReference type="NCBI Taxonomy" id="205921"/>
    <lineage>
        <taxon>Bacteria</taxon>
        <taxon>Bacillati</taxon>
        <taxon>Bacillota</taxon>
        <taxon>Bacilli</taxon>
        <taxon>Lactobacillales</taxon>
        <taxon>Streptococcaceae</taxon>
        <taxon>Streptococcus</taxon>
    </lineage>
</organism>
<evidence type="ECO:0000255" key="1">
    <source>
        <dbReference type="HAMAP-Rule" id="MF_01220"/>
    </source>
</evidence>
<comment type="function">
    <text evidence="1">Catalyzes the reversible phosphorylation of UMP to UDP.</text>
</comment>
<comment type="catalytic activity">
    <reaction evidence="1">
        <text>UMP + ATP = UDP + ADP</text>
        <dbReference type="Rhea" id="RHEA:24400"/>
        <dbReference type="ChEBI" id="CHEBI:30616"/>
        <dbReference type="ChEBI" id="CHEBI:57865"/>
        <dbReference type="ChEBI" id="CHEBI:58223"/>
        <dbReference type="ChEBI" id="CHEBI:456216"/>
        <dbReference type="EC" id="2.7.4.22"/>
    </reaction>
</comment>
<comment type="activity regulation">
    <text evidence="1">Allosterically activated by GTP. Inhibited by UTP.</text>
</comment>
<comment type="pathway">
    <text evidence="1">Pyrimidine metabolism; CTP biosynthesis via de novo pathway; UDP from UMP (UMPK route): step 1/1.</text>
</comment>
<comment type="subunit">
    <text evidence="1">Homohexamer.</text>
</comment>
<comment type="subcellular location">
    <subcellularLocation>
        <location evidence="1">Cytoplasm</location>
    </subcellularLocation>
</comment>
<comment type="similarity">
    <text evidence="1">Belongs to the UMP kinase family.</text>
</comment>
<accession>Q3K010</accession>
<protein>
    <recommendedName>
        <fullName evidence="1">Uridylate kinase</fullName>
        <shortName evidence="1">UK</shortName>
        <ecNumber evidence="1">2.7.4.22</ecNumber>
    </recommendedName>
    <alternativeName>
        <fullName evidence="1">Uridine monophosphate kinase</fullName>
        <shortName evidence="1">UMP kinase</shortName>
        <shortName evidence="1">UMPK</shortName>
    </alternativeName>
</protein>
<keyword id="KW-0021">Allosteric enzyme</keyword>
<keyword id="KW-0067">ATP-binding</keyword>
<keyword id="KW-0963">Cytoplasm</keyword>
<keyword id="KW-0418">Kinase</keyword>
<keyword id="KW-0547">Nucleotide-binding</keyword>
<keyword id="KW-0665">Pyrimidine biosynthesis</keyword>
<keyword id="KW-0808">Transferase</keyword>
<dbReference type="EC" id="2.7.4.22" evidence="1"/>
<dbReference type="EMBL" id="CP000114">
    <property type="protein sequence ID" value="ABA44401.1"/>
    <property type="molecule type" value="Genomic_DNA"/>
</dbReference>
<dbReference type="RefSeq" id="WP_000433491.1">
    <property type="nucleotide sequence ID" value="NC_007432.1"/>
</dbReference>
<dbReference type="SMR" id="Q3K010"/>
<dbReference type="GeneID" id="66886368"/>
<dbReference type="KEGG" id="sak:SAK_1537"/>
<dbReference type="HOGENOM" id="CLU_033861_0_0_9"/>
<dbReference type="UniPathway" id="UPA00159">
    <property type="reaction ID" value="UER00275"/>
</dbReference>
<dbReference type="GO" id="GO:0005737">
    <property type="term" value="C:cytoplasm"/>
    <property type="evidence" value="ECO:0007669"/>
    <property type="project" value="UniProtKB-SubCell"/>
</dbReference>
<dbReference type="GO" id="GO:0005524">
    <property type="term" value="F:ATP binding"/>
    <property type="evidence" value="ECO:0007669"/>
    <property type="project" value="UniProtKB-KW"/>
</dbReference>
<dbReference type="GO" id="GO:0033862">
    <property type="term" value="F:UMP kinase activity"/>
    <property type="evidence" value="ECO:0007669"/>
    <property type="project" value="UniProtKB-EC"/>
</dbReference>
<dbReference type="GO" id="GO:0044210">
    <property type="term" value="P:'de novo' CTP biosynthetic process"/>
    <property type="evidence" value="ECO:0007669"/>
    <property type="project" value="UniProtKB-UniRule"/>
</dbReference>
<dbReference type="GO" id="GO:0006225">
    <property type="term" value="P:UDP biosynthetic process"/>
    <property type="evidence" value="ECO:0007669"/>
    <property type="project" value="TreeGrafter"/>
</dbReference>
<dbReference type="CDD" id="cd04254">
    <property type="entry name" value="AAK_UMPK-PyrH-Ec"/>
    <property type="match status" value="1"/>
</dbReference>
<dbReference type="FunFam" id="3.40.1160.10:FF:000019">
    <property type="entry name" value="Uridylate kinase"/>
    <property type="match status" value="1"/>
</dbReference>
<dbReference type="Gene3D" id="3.40.1160.10">
    <property type="entry name" value="Acetylglutamate kinase-like"/>
    <property type="match status" value="1"/>
</dbReference>
<dbReference type="HAMAP" id="MF_01220_B">
    <property type="entry name" value="PyrH_B"/>
    <property type="match status" value="1"/>
</dbReference>
<dbReference type="InterPro" id="IPR036393">
    <property type="entry name" value="AceGlu_kinase-like_sf"/>
</dbReference>
<dbReference type="InterPro" id="IPR001048">
    <property type="entry name" value="Asp/Glu/Uridylate_kinase"/>
</dbReference>
<dbReference type="InterPro" id="IPR011817">
    <property type="entry name" value="Uridylate_kinase"/>
</dbReference>
<dbReference type="InterPro" id="IPR015963">
    <property type="entry name" value="Uridylate_kinase_bac"/>
</dbReference>
<dbReference type="NCBIfam" id="TIGR02075">
    <property type="entry name" value="pyrH_bact"/>
    <property type="match status" value="1"/>
</dbReference>
<dbReference type="PANTHER" id="PTHR42833">
    <property type="entry name" value="URIDYLATE KINASE"/>
    <property type="match status" value="1"/>
</dbReference>
<dbReference type="PANTHER" id="PTHR42833:SF4">
    <property type="entry name" value="URIDYLATE KINASE PUMPKIN, CHLOROPLASTIC"/>
    <property type="match status" value="1"/>
</dbReference>
<dbReference type="Pfam" id="PF00696">
    <property type="entry name" value="AA_kinase"/>
    <property type="match status" value="1"/>
</dbReference>
<dbReference type="PIRSF" id="PIRSF005650">
    <property type="entry name" value="Uridylate_kin"/>
    <property type="match status" value="1"/>
</dbReference>
<dbReference type="SUPFAM" id="SSF53633">
    <property type="entry name" value="Carbamate kinase-like"/>
    <property type="match status" value="1"/>
</dbReference>
<proteinExistence type="inferred from homology"/>